<reference key="1">
    <citation type="journal article" date="1998" name="Gene">
        <title>Characterisation of the urease gene cluster in Bordetella bronchiseptica.</title>
        <authorList>
            <person name="McMillan D.J."/>
            <person name="Mau M."/>
            <person name="Walker M.J."/>
        </authorList>
    </citation>
    <scope>NUCLEOTIDE SEQUENCE [GENOMIC DNA]</scope>
    <source>
        <strain>BB7866</strain>
    </source>
</reference>
<reference key="2">
    <citation type="journal article" date="2003" name="Nat. Genet.">
        <title>Comparative analysis of the genome sequences of Bordetella pertussis, Bordetella parapertussis and Bordetella bronchiseptica.</title>
        <authorList>
            <person name="Parkhill J."/>
            <person name="Sebaihia M."/>
            <person name="Preston A."/>
            <person name="Murphy L.D."/>
            <person name="Thomson N.R."/>
            <person name="Harris D.E."/>
            <person name="Holden M.T.G."/>
            <person name="Churcher C.M."/>
            <person name="Bentley S.D."/>
            <person name="Mungall K.L."/>
            <person name="Cerdeno-Tarraga A.-M."/>
            <person name="Temple L."/>
            <person name="James K.D."/>
            <person name="Harris B."/>
            <person name="Quail M.A."/>
            <person name="Achtman M."/>
            <person name="Atkin R."/>
            <person name="Baker S."/>
            <person name="Basham D."/>
            <person name="Bason N."/>
            <person name="Cherevach I."/>
            <person name="Chillingworth T."/>
            <person name="Collins M."/>
            <person name="Cronin A."/>
            <person name="Davis P."/>
            <person name="Doggett J."/>
            <person name="Feltwell T."/>
            <person name="Goble A."/>
            <person name="Hamlin N."/>
            <person name="Hauser H."/>
            <person name="Holroyd S."/>
            <person name="Jagels K."/>
            <person name="Leather S."/>
            <person name="Moule S."/>
            <person name="Norberczak H."/>
            <person name="O'Neil S."/>
            <person name="Ormond D."/>
            <person name="Price C."/>
            <person name="Rabbinowitsch E."/>
            <person name="Rutter S."/>
            <person name="Sanders M."/>
            <person name="Saunders D."/>
            <person name="Seeger K."/>
            <person name="Sharp S."/>
            <person name="Simmonds M."/>
            <person name="Skelton J."/>
            <person name="Squares R."/>
            <person name="Squares S."/>
            <person name="Stevens K."/>
            <person name="Unwin L."/>
            <person name="Whitehead S."/>
            <person name="Barrell B.G."/>
            <person name="Maskell D.J."/>
        </authorList>
    </citation>
    <scope>NUCLEOTIDE SEQUENCE [LARGE SCALE GENOMIC DNA]</scope>
    <source>
        <strain>ATCC BAA-588 / NCTC 13252 / RB50</strain>
    </source>
</reference>
<organism>
    <name type="scientific">Bordetella bronchiseptica (strain ATCC BAA-588 / NCTC 13252 / RB50)</name>
    <name type="common">Alcaligenes bronchisepticus</name>
    <dbReference type="NCBI Taxonomy" id="257310"/>
    <lineage>
        <taxon>Bacteria</taxon>
        <taxon>Pseudomonadati</taxon>
        <taxon>Pseudomonadota</taxon>
        <taxon>Betaproteobacteria</taxon>
        <taxon>Burkholderiales</taxon>
        <taxon>Alcaligenaceae</taxon>
        <taxon>Bordetella</taxon>
    </lineage>
</organism>
<feature type="chain" id="PRO_0000097994" description="Urease subunit gamma">
    <location>
        <begin position="1"/>
        <end position="100"/>
    </location>
</feature>
<evidence type="ECO:0000255" key="1">
    <source>
        <dbReference type="HAMAP-Rule" id="MF_00739"/>
    </source>
</evidence>
<protein>
    <recommendedName>
        <fullName evidence="1">Urease subunit gamma</fullName>
        <ecNumber evidence="1">3.5.1.5</ecNumber>
    </recommendedName>
    <alternativeName>
        <fullName evidence="1">Urea amidohydrolase subunit gamma</fullName>
    </alternativeName>
</protein>
<sequence>MELTPREKDKLLIFTAALLAERRRARGLKLNYPETVALITAALMEGARDGKTVAELMSEGTRILGRDEVMEGVPEMISNIQVEVTFPDGTKLITVHNPVV</sequence>
<dbReference type="EC" id="3.5.1.5" evidence="1"/>
<dbReference type="EMBL" id="AF000579">
    <property type="protein sequence ID" value="AAC46125.1"/>
    <property type="molecule type" value="Genomic_DNA"/>
</dbReference>
<dbReference type="EMBL" id="BX640450">
    <property type="protein sequence ID" value="CAE34689.1"/>
    <property type="molecule type" value="Genomic_DNA"/>
</dbReference>
<dbReference type="RefSeq" id="WP_003814830.1">
    <property type="nucleotide sequence ID" value="NC_002927.3"/>
</dbReference>
<dbReference type="SMR" id="P0A4U0"/>
<dbReference type="KEGG" id="bbr:BB4326"/>
<dbReference type="eggNOG" id="COG0831">
    <property type="taxonomic scope" value="Bacteria"/>
</dbReference>
<dbReference type="HOGENOM" id="CLU_145825_1_0_4"/>
<dbReference type="UniPathway" id="UPA00258">
    <property type="reaction ID" value="UER00370"/>
</dbReference>
<dbReference type="Proteomes" id="UP000001027">
    <property type="component" value="Chromosome"/>
</dbReference>
<dbReference type="GO" id="GO:0005737">
    <property type="term" value="C:cytoplasm"/>
    <property type="evidence" value="ECO:0007669"/>
    <property type="project" value="UniProtKB-SubCell"/>
</dbReference>
<dbReference type="GO" id="GO:0016151">
    <property type="term" value="F:nickel cation binding"/>
    <property type="evidence" value="ECO:0007669"/>
    <property type="project" value="InterPro"/>
</dbReference>
<dbReference type="GO" id="GO:0009039">
    <property type="term" value="F:urease activity"/>
    <property type="evidence" value="ECO:0007669"/>
    <property type="project" value="UniProtKB-UniRule"/>
</dbReference>
<dbReference type="GO" id="GO:0043419">
    <property type="term" value="P:urea catabolic process"/>
    <property type="evidence" value="ECO:0007669"/>
    <property type="project" value="UniProtKB-UniRule"/>
</dbReference>
<dbReference type="CDD" id="cd00390">
    <property type="entry name" value="Urease_gamma"/>
    <property type="match status" value="1"/>
</dbReference>
<dbReference type="Gene3D" id="3.30.280.10">
    <property type="entry name" value="Urease, gamma-like subunit"/>
    <property type="match status" value="1"/>
</dbReference>
<dbReference type="HAMAP" id="MF_00739">
    <property type="entry name" value="Urease_gamma"/>
    <property type="match status" value="1"/>
</dbReference>
<dbReference type="InterPro" id="IPR012010">
    <property type="entry name" value="Urease_gamma"/>
</dbReference>
<dbReference type="InterPro" id="IPR002026">
    <property type="entry name" value="Urease_gamma/gamma-beta_su"/>
</dbReference>
<dbReference type="InterPro" id="IPR036463">
    <property type="entry name" value="Urease_gamma_sf"/>
</dbReference>
<dbReference type="InterPro" id="IPR050069">
    <property type="entry name" value="Urease_subunit"/>
</dbReference>
<dbReference type="NCBIfam" id="NF009712">
    <property type="entry name" value="PRK13241.1"/>
    <property type="match status" value="1"/>
</dbReference>
<dbReference type="NCBIfam" id="TIGR00193">
    <property type="entry name" value="urease_gam"/>
    <property type="match status" value="1"/>
</dbReference>
<dbReference type="PANTHER" id="PTHR33569">
    <property type="entry name" value="UREASE"/>
    <property type="match status" value="1"/>
</dbReference>
<dbReference type="PANTHER" id="PTHR33569:SF1">
    <property type="entry name" value="UREASE"/>
    <property type="match status" value="1"/>
</dbReference>
<dbReference type="Pfam" id="PF00547">
    <property type="entry name" value="Urease_gamma"/>
    <property type="match status" value="1"/>
</dbReference>
<dbReference type="PIRSF" id="PIRSF001223">
    <property type="entry name" value="Urease_gamma"/>
    <property type="match status" value="1"/>
</dbReference>
<dbReference type="SUPFAM" id="SSF54111">
    <property type="entry name" value="Urease, gamma-subunit"/>
    <property type="match status" value="1"/>
</dbReference>
<name>URE3_BORBR</name>
<comment type="catalytic activity">
    <reaction evidence="1">
        <text>urea + 2 H2O + H(+) = hydrogencarbonate + 2 NH4(+)</text>
        <dbReference type="Rhea" id="RHEA:20557"/>
        <dbReference type="ChEBI" id="CHEBI:15377"/>
        <dbReference type="ChEBI" id="CHEBI:15378"/>
        <dbReference type="ChEBI" id="CHEBI:16199"/>
        <dbReference type="ChEBI" id="CHEBI:17544"/>
        <dbReference type="ChEBI" id="CHEBI:28938"/>
        <dbReference type="EC" id="3.5.1.5"/>
    </reaction>
</comment>
<comment type="pathway">
    <text evidence="1">Nitrogen metabolism; urea degradation; CO(2) and NH(3) from urea (urease route): step 1/1.</text>
</comment>
<comment type="subunit">
    <text evidence="1">Heterotrimer of UreA (gamma), UreB (beta) and UreC (alpha) subunits. Three heterotrimers associate to form the active enzyme.</text>
</comment>
<comment type="subcellular location">
    <subcellularLocation>
        <location evidence="1">Cytoplasm</location>
    </subcellularLocation>
</comment>
<comment type="similarity">
    <text evidence="1">Belongs to the urease gamma subunit family.</text>
</comment>
<accession>P0A4U0</accession>
<accession>O06705</accession>
<keyword id="KW-0963">Cytoplasm</keyword>
<keyword id="KW-0378">Hydrolase</keyword>
<gene>
    <name evidence="1" type="primary">ureA</name>
    <name type="ordered locus">BB4326</name>
</gene>
<proteinExistence type="inferred from homology"/>